<protein>
    <recommendedName>
        <fullName evidence="1">Crossover junction endodeoxyribonuclease RuvC</fullName>
        <ecNumber evidence="1">3.1.21.10</ecNumber>
    </recommendedName>
    <alternativeName>
        <fullName evidence="1">Holliday junction nuclease RuvC</fullName>
    </alternativeName>
    <alternativeName>
        <fullName evidence="1">Holliday junction resolvase RuvC</fullName>
    </alternativeName>
</protein>
<comment type="function">
    <text evidence="1">The RuvA-RuvB-RuvC complex processes Holliday junction (HJ) DNA during genetic recombination and DNA repair. Endonuclease that resolves HJ intermediates. Cleaves cruciform DNA by making single-stranded nicks across the HJ at symmetrical positions within the homologous arms, yielding a 5'-phosphate and a 3'-hydroxyl group; requires a central core of homology in the junction. The consensus cleavage sequence is 5'-(A/T)TT(C/G)-3'. Cleavage occurs on the 3'-side of the TT dinucleotide at the point of strand exchange. HJ branch migration catalyzed by RuvA-RuvB allows RuvC to scan DNA until it finds its consensus sequence, where it cleaves and resolves the cruciform DNA.</text>
</comment>
<comment type="catalytic activity">
    <reaction evidence="1">
        <text>Endonucleolytic cleavage at a junction such as a reciprocal single-stranded crossover between two homologous DNA duplexes (Holliday junction).</text>
        <dbReference type="EC" id="3.1.21.10"/>
    </reaction>
</comment>
<comment type="cofactor">
    <cofactor evidence="1">
        <name>Mg(2+)</name>
        <dbReference type="ChEBI" id="CHEBI:18420"/>
    </cofactor>
    <text evidence="1">Binds 2 Mg(2+) ion per subunit.</text>
</comment>
<comment type="subunit">
    <text evidence="1">Homodimer which binds Holliday junction (HJ) DNA. The HJ becomes 2-fold symmetrical on binding to RuvC with unstacked arms; it has a different conformation from HJ DNA in complex with RuvA. In the full resolvosome a probable DNA-RuvA(4)-RuvB(12)-RuvC(2) complex forms which resolves the HJ.</text>
</comment>
<comment type="subcellular location">
    <subcellularLocation>
        <location evidence="1">Cytoplasm</location>
    </subcellularLocation>
</comment>
<comment type="similarity">
    <text evidence="1">Belongs to the RuvC family.</text>
</comment>
<name>RUVC_RHOP5</name>
<accession>Q07H95</accession>
<reference key="1">
    <citation type="submission" date="2006-09" db="EMBL/GenBank/DDBJ databases">
        <title>Complete sequence of Rhodopseudomonas palustris BisA53.</title>
        <authorList>
            <consortium name="US DOE Joint Genome Institute"/>
            <person name="Copeland A."/>
            <person name="Lucas S."/>
            <person name="Lapidus A."/>
            <person name="Barry K."/>
            <person name="Detter J.C."/>
            <person name="Glavina del Rio T."/>
            <person name="Hammon N."/>
            <person name="Israni S."/>
            <person name="Dalin E."/>
            <person name="Tice H."/>
            <person name="Pitluck S."/>
            <person name="Chain P."/>
            <person name="Malfatti S."/>
            <person name="Shin M."/>
            <person name="Vergez L."/>
            <person name="Schmutz J."/>
            <person name="Larimer F."/>
            <person name="Land M."/>
            <person name="Hauser L."/>
            <person name="Pelletier D.A."/>
            <person name="Kyrpides N."/>
            <person name="Kim E."/>
            <person name="Harwood C.S."/>
            <person name="Oda Y."/>
            <person name="Richardson P."/>
        </authorList>
    </citation>
    <scope>NUCLEOTIDE SEQUENCE [LARGE SCALE GENOMIC DNA]</scope>
    <source>
        <strain>BisA53</strain>
    </source>
</reference>
<proteinExistence type="inferred from homology"/>
<sequence length="174" mass="18210">MTQPPNRQPVRILGIDPGLRRTGWGVIESEGNRLVFIGCGSVEPPDTLPLAERLLAIHRGLAKVLADFAPDEAAVEQTFVNKDAGATLKLGQARGVAMLAPAMVGLSVAEYAPNLVKKTVVGAGHADKNQIQMMLKILLPKAEPPSADAADALAVAITHAHHRVAAARLKAVGA</sequence>
<organism>
    <name type="scientific">Rhodopseudomonas palustris (strain BisA53)</name>
    <dbReference type="NCBI Taxonomy" id="316055"/>
    <lineage>
        <taxon>Bacteria</taxon>
        <taxon>Pseudomonadati</taxon>
        <taxon>Pseudomonadota</taxon>
        <taxon>Alphaproteobacteria</taxon>
        <taxon>Hyphomicrobiales</taxon>
        <taxon>Nitrobacteraceae</taxon>
        <taxon>Rhodopseudomonas</taxon>
    </lineage>
</organism>
<keyword id="KW-0963">Cytoplasm</keyword>
<keyword id="KW-0227">DNA damage</keyword>
<keyword id="KW-0233">DNA recombination</keyword>
<keyword id="KW-0234">DNA repair</keyword>
<keyword id="KW-0238">DNA-binding</keyword>
<keyword id="KW-0255">Endonuclease</keyword>
<keyword id="KW-0378">Hydrolase</keyword>
<keyword id="KW-0460">Magnesium</keyword>
<keyword id="KW-0479">Metal-binding</keyword>
<keyword id="KW-0540">Nuclease</keyword>
<dbReference type="EC" id="3.1.21.10" evidence="1"/>
<dbReference type="EMBL" id="CP000463">
    <property type="protein sequence ID" value="ABJ08689.1"/>
    <property type="molecule type" value="Genomic_DNA"/>
</dbReference>
<dbReference type="SMR" id="Q07H95"/>
<dbReference type="STRING" id="316055.RPE_4770"/>
<dbReference type="KEGG" id="rpe:RPE_4770"/>
<dbReference type="eggNOG" id="COG0817">
    <property type="taxonomic scope" value="Bacteria"/>
</dbReference>
<dbReference type="HOGENOM" id="CLU_091257_1_0_5"/>
<dbReference type="OrthoDB" id="9805499at2"/>
<dbReference type="GO" id="GO:0005737">
    <property type="term" value="C:cytoplasm"/>
    <property type="evidence" value="ECO:0007669"/>
    <property type="project" value="UniProtKB-SubCell"/>
</dbReference>
<dbReference type="GO" id="GO:0048476">
    <property type="term" value="C:Holliday junction resolvase complex"/>
    <property type="evidence" value="ECO:0007669"/>
    <property type="project" value="UniProtKB-UniRule"/>
</dbReference>
<dbReference type="GO" id="GO:0008821">
    <property type="term" value="F:crossover junction DNA endonuclease activity"/>
    <property type="evidence" value="ECO:0007669"/>
    <property type="project" value="UniProtKB-UniRule"/>
</dbReference>
<dbReference type="GO" id="GO:0003677">
    <property type="term" value="F:DNA binding"/>
    <property type="evidence" value="ECO:0007669"/>
    <property type="project" value="UniProtKB-KW"/>
</dbReference>
<dbReference type="GO" id="GO:0000287">
    <property type="term" value="F:magnesium ion binding"/>
    <property type="evidence" value="ECO:0007669"/>
    <property type="project" value="UniProtKB-UniRule"/>
</dbReference>
<dbReference type="GO" id="GO:0006310">
    <property type="term" value="P:DNA recombination"/>
    <property type="evidence" value="ECO:0007669"/>
    <property type="project" value="UniProtKB-UniRule"/>
</dbReference>
<dbReference type="GO" id="GO:0006281">
    <property type="term" value="P:DNA repair"/>
    <property type="evidence" value="ECO:0007669"/>
    <property type="project" value="UniProtKB-UniRule"/>
</dbReference>
<dbReference type="CDD" id="cd16962">
    <property type="entry name" value="RuvC"/>
    <property type="match status" value="1"/>
</dbReference>
<dbReference type="FunFam" id="3.30.420.10:FF:000002">
    <property type="entry name" value="Crossover junction endodeoxyribonuclease RuvC"/>
    <property type="match status" value="1"/>
</dbReference>
<dbReference type="Gene3D" id="3.30.420.10">
    <property type="entry name" value="Ribonuclease H-like superfamily/Ribonuclease H"/>
    <property type="match status" value="1"/>
</dbReference>
<dbReference type="HAMAP" id="MF_00034">
    <property type="entry name" value="RuvC"/>
    <property type="match status" value="1"/>
</dbReference>
<dbReference type="InterPro" id="IPR012337">
    <property type="entry name" value="RNaseH-like_sf"/>
</dbReference>
<dbReference type="InterPro" id="IPR036397">
    <property type="entry name" value="RNaseH_sf"/>
</dbReference>
<dbReference type="InterPro" id="IPR020563">
    <property type="entry name" value="X-over_junc_endoDNase_Mg_BS"/>
</dbReference>
<dbReference type="InterPro" id="IPR002176">
    <property type="entry name" value="X-over_junc_endoDNase_RuvC"/>
</dbReference>
<dbReference type="NCBIfam" id="TIGR00228">
    <property type="entry name" value="ruvC"/>
    <property type="match status" value="1"/>
</dbReference>
<dbReference type="PANTHER" id="PTHR30194">
    <property type="entry name" value="CROSSOVER JUNCTION ENDODEOXYRIBONUCLEASE RUVC"/>
    <property type="match status" value="1"/>
</dbReference>
<dbReference type="PANTHER" id="PTHR30194:SF3">
    <property type="entry name" value="CROSSOVER JUNCTION ENDODEOXYRIBONUCLEASE RUVC"/>
    <property type="match status" value="1"/>
</dbReference>
<dbReference type="Pfam" id="PF02075">
    <property type="entry name" value="RuvC"/>
    <property type="match status" value="1"/>
</dbReference>
<dbReference type="PRINTS" id="PR00696">
    <property type="entry name" value="RSOLVASERUVC"/>
</dbReference>
<dbReference type="SUPFAM" id="SSF53098">
    <property type="entry name" value="Ribonuclease H-like"/>
    <property type="match status" value="1"/>
</dbReference>
<dbReference type="PROSITE" id="PS01321">
    <property type="entry name" value="RUVC"/>
    <property type="match status" value="1"/>
</dbReference>
<evidence type="ECO:0000255" key="1">
    <source>
        <dbReference type="HAMAP-Rule" id="MF_00034"/>
    </source>
</evidence>
<feature type="chain" id="PRO_1000002812" description="Crossover junction endodeoxyribonuclease RuvC">
    <location>
        <begin position="1"/>
        <end position="174"/>
    </location>
</feature>
<feature type="active site" evidence="1">
    <location>
        <position position="16"/>
    </location>
</feature>
<feature type="active site" evidence="1">
    <location>
        <position position="76"/>
    </location>
</feature>
<feature type="active site" evidence="1">
    <location>
        <position position="148"/>
    </location>
</feature>
<feature type="binding site" evidence="1">
    <location>
        <position position="16"/>
    </location>
    <ligand>
        <name>Mg(2+)</name>
        <dbReference type="ChEBI" id="CHEBI:18420"/>
        <label>1</label>
    </ligand>
</feature>
<feature type="binding site" evidence="1">
    <location>
        <position position="76"/>
    </location>
    <ligand>
        <name>Mg(2+)</name>
        <dbReference type="ChEBI" id="CHEBI:18420"/>
        <label>2</label>
    </ligand>
</feature>
<feature type="binding site" evidence="1">
    <location>
        <position position="148"/>
    </location>
    <ligand>
        <name>Mg(2+)</name>
        <dbReference type="ChEBI" id="CHEBI:18420"/>
        <label>1</label>
    </ligand>
</feature>
<gene>
    <name evidence="1" type="primary">ruvC</name>
    <name type="ordered locus">RPE_4770</name>
</gene>